<proteinExistence type="inferred from homology"/>
<protein>
    <recommendedName>
        <fullName evidence="1">Formate-dependent phosphoribosylglycinamide formyltransferase</fullName>
        <ecNumber evidence="1">6.3.1.21</ecNumber>
    </recommendedName>
    <alternativeName>
        <fullName evidence="1">5'-phosphoribosylglycinamide transformylase 2</fullName>
    </alternativeName>
    <alternativeName>
        <fullName evidence="1">Formate-dependent GAR transformylase</fullName>
    </alternativeName>
    <alternativeName>
        <fullName evidence="1">GAR transformylase 2</fullName>
        <shortName evidence="1">GART 2</shortName>
    </alternativeName>
    <alternativeName>
        <fullName evidence="1">Non-folate glycinamide ribonucleotide transformylase</fullName>
    </alternativeName>
    <alternativeName>
        <fullName evidence="1">Phosphoribosylglycinamide formyltransferase 2</fullName>
    </alternativeName>
</protein>
<dbReference type="EC" id="6.3.1.21" evidence="1"/>
<dbReference type="EMBL" id="AJ749949">
    <property type="protein sequence ID" value="CAG46400.1"/>
    <property type="molecule type" value="Genomic_DNA"/>
</dbReference>
<dbReference type="RefSeq" id="WP_003022766.1">
    <property type="nucleotide sequence ID" value="NC_006570.2"/>
</dbReference>
<dbReference type="RefSeq" id="YP_170658.1">
    <property type="nucleotide sequence ID" value="NC_006570.2"/>
</dbReference>
<dbReference type="SMR" id="Q5NE84"/>
<dbReference type="STRING" id="177416.FTT_1767c"/>
<dbReference type="DNASU" id="3191662"/>
<dbReference type="EnsemblBacteria" id="CAG46400">
    <property type="protein sequence ID" value="CAG46400"/>
    <property type="gene ID" value="FTT_1767c"/>
</dbReference>
<dbReference type="GeneID" id="39482426"/>
<dbReference type="KEGG" id="ftu:FTT_1767c"/>
<dbReference type="eggNOG" id="COG0027">
    <property type="taxonomic scope" value="Bacteria"/>
</dbReference>
<dbReference type="OrthoDB" id="9804625at2"/>
<dbReference type="UniPathway" id="UPA00074">
    <property type="reaction ID" value="UER00127"/>
</dbReference>
<dbReference type="Proteomes" id="UP000001174">
    <property type="component" value="Chromosome"/>
</dbReference>
<dbReference type="GO" id="GO:0005829">
    <property type="term" value="C:cytosol"/>
    <property type="evidence" value="ECO:0007669"/>
    <property type="project" value="TreeGrafter"/>
</dbReference>
<dbReference type="GO" id="GO:0005524">
    <property type="term" value="F:ATP binding"/>
    <property type="evidence" value="ECO:0007669"/>
    <property type="project" value="UniProtKB-UniRule"/>
</dbReference>
<dbReference type="GO" id="GO:0000287">
    <property type="term" value="F:magnesium ion binding"/>
    <property type="evidence" value="ECO:0007669"/>
    <property type="project" value="InterPro"/>
</dbReference>
<dbReference type="GO" id="GO:0043815">
    <property type="term" value="F:phosphoribosylglycinamide formyltransferase 2 activity"/>
    <property type="evidence" value="ECO:0007669"/>
    <property type="project" value="UniProtKB-UniRule"/>
</dbReference>
<dbReference type="GO" id="GO:0004644">
    <property type="term" value="F:phosphoribosylglycinamide formyltransferase activity"/>
    <property type="evidence" value="ECO:0007669"/>
    <property type="project" value="InterPro"/>
</dbReference>
<dbReference type="GO" id="GO:0006189">
    <property type="term" value="P:'de novo' IMP biosynthetic process"/>
    <property type="evidence" value="ECO:0007669"/>
    <property type="project" value="UniProtKB-UniRule"/>
</dbReference>
<dbReference type="Gene3D" id="3.40.50.20">
    <property type="match status" value="1"/>
</dbReference>
<dbReference type="Gene3D" id="3.30.1490.20">
    <property type="entry name" value="ATP-grasp fold, A domain"/>
    <property type="match status" value="1"/>
</dbReference>
<dbReference type="Gene3D" id="3.30.470.20">
    <property type="entry name" value="ATP-grasp fold, B domain"/>
    <property type="match status" value="1"/>
</dbReference>
<dbReference type="HAMAP" id="MF_01643">
    <property type="entry name" value="PurT"/>
    <property type="match status" value="1"/>
</dbReference>
<dbReference type="InterPro" id="IPR011761">
    <property type="entry name" value="ATP-grasp"/>
</dbReference>
<dbReference type="InterPro" id="IPR003135">
    <property type="entry name" value="ATP-grasp_carboxylate-amine"/>
</dbReference>
<dbReference type="InterPro" id="IPR013815">
    <property type="entry name" value="ATP_grasp_subdomain_1"/>
</dbReference>
<dbReference type="InterPro" id="IPR016185">
    <property type="entry name" value="PreATP-grasp_dom_sf"/>
</dbReference>
<dbReference type="InterPro" id="IPR005862">
    <property type="entry name" value="PurT"/>
</dbReference>
<dbReference type="InterPro" id="IPR054350">
    <property type="entry name" value="PurT/PurK_preATP-grasp"/>
</dbReference>
<dbReference type="InterPro" id="IPR048740">
    <property type="entry name" value="PurT_C"/>
</dbReference>
<dbReference type="InterPro" id="IPR011054">
    <property type="entry name" value="Rudment_hybrid_motif"/>
</dbReference>
<dbReference type="NCBIfam" id="NF006766">
    <property type="entry name" value="PRK09288.1"/>
    <property type="match status" value="1"/>
</dbReference>
<dbReference type="NCBIfam" id="TIGR01142">
    <property type="entry name" value="purT"/>
    <property type="match status" value="1"/>
</dbReference>
<dbReference type="PANTHER" id="PTHR43055">
    <property type="entry name" value="FORMATE-DEPENDENT PHOSPHORIBOSYLGLYCINAMIDE FORMYLTRANSFERASE"/>
    <property type="match status" value="1"/>
</dbReference>
<dbReference type="PANTHER" id="PTHR43055:SF1">
    <property type="entry name" value="FORMATE-DEPENDENT PHOSPHORIBOSYLGLYCINAMIDE FORMYLTRANSFERASE"/>
    <property type="match status" value="1"/>
</dbReference>
<dbReference type="Pfam" id="PF02222">
    <property type="entry name" value="ATP-grasp"/>
    <property type="match status" value="1"/>
</dbReference>
<dbReference type="Pfam" id="PF21244">
    <property type="entry name" value="PurT_C"/>
    <property type="match status" value="1"/>
</dbReference>
<dbReference type="Pfam" id="PF22660">
    <property type="entry name" value="RS_preATP-grasp-like"/>
    <property type="match status" value="1"/>
</dbReference>
<dbReference type="SUPFAM" id="SSF56059">
    <property type="entry name" value="Glutathione synthetase ATP-binding domain-like"/>
    <property type="match status" value="1"/>
</dbReference>
<dbReference type="SUPFAM" id="SSF52440">
    <property type="entry name" value="PreATP-grasp domain"/>
    <property type="match status" value="1"/>
</dbReference>
<dbReference type="SUPFAM" id="SSF51246">
    <property type="entry name" value="Rudiment single hybrid motif"/>
    <property type="match status" value="1"/>
</dbReference>
<dbReference type="PROSITE" id="PS50975">
    <property type="entry name" value="ATP_GRASP"/>
    <property type="match status" value="1"/>
</dbReference>
<organism>
    <name type="scientific">Francisella tularensis subsp. tularensis (strain SCHU S4 / Schu 4)</name>
    <dbReference type="NCBI Taxonomy" id="177416"/>
    <lineage>
        <taxon>Bacteria</taxon>
        <taxon>Pseudomonadati</taxon>
        <taxon>Pseudomonadota</taxon>
        <taxon>Gammaproteobacteria</taxon>
        <taxon>Thiotrichales</taxon>
        <taxon>Francisellaceae</taxon>
        <taxon>Francisella</taxon>
    </lineage>
</organism>
<name>PURT_FRATT</name>
<reference key="1">
    <citation type="journal article" date="2005" name="Nat. Genet.">
        <title>The complete genome sequence of Francisella tularensis, the causative agent of tularemia.</title>
        <authorList>
            <person name="Larsson P."/>
            <person name="Oyston P.C.F."/>
            <person name="Chain P."/>
            <person name="Chu M.C."/>
            <person name="Duffield M."/>
            <person name="Fuxelius H.-H."/>
            <person name="Garcia E."/>
            <person name="Haelltorp G."/>
            <person name="Johansson D."/>
            <person name="Isherwood K.E."/>
            <person name="Karp P.D."/>
            <person name="Larsson E."/>
            <person name="Liu Y."/>
            <person name="Michell S."/>
            <person name="Prior J."/>
            <person name="Prior R."/>
            <person name="Malfatti S."/>
            <person name="Sjoestedt A."/>
            <person name="Svensson K."/>
            <person name="Thompson N."/>
            <person name="Vergez L."/>
            <person name="Wagg J.K."/>
            <person name="Wren B.W."/>
            <person name="Lindler L.E."/>
            <person name="Andersson S.G.E."/>
            <person name="Forsman M."/>
            <person name="Titball R.W."/>
        </authorList>
    </citation>
    <scope>NUCLEOTIDE SEQUENCE [LARGE SCALE GENOMIC DNA]</scope>
    <source>
        <strain>SCHU S4 / Schu 4</strain>
    </source>
</reference>
<feature type="chain" id="PRO_0000319171" description="Formate-dependent phosphoribosylglycinamide formyltransferase">
    <location>
        <begin position="1"/>
        <end position="386"/>
    </location>
</feature>
<feature type="domain" description="ATP-grasp" evidence="1">
    <location>
        <begin position="112"/>
        <end position="301"/>
    </location>
</feature>
<feature type="binding site" evidence="1">
    <location>
        <begin position="15"/>
        <end position="16"/>
    </location>
    <ligand>
        <name>N(1)-(5-phospho-beta-D-ribosyl)glycinamide</name>
        <dbReference type="ChEBI" id="CHEBI:143788"/>
    </ligand>
</feature>
<feature type="binding site" evidence="1">
    <location>
        <position position="75"/>
    </location>
    <ligand>
        <name>N(1)-(5-phospho-beta-D-ribosyl)glycinamide</name>
        <dbReference type="ChEBI" id="CHEBI:143788"/>
    </ligand>
</feature>
<feature type="binding site" evidence="1">
    <location>
        <position position="107"/>
    </location>
    <ligand>
        <name>ATP</name>
        <dbReference type="ChEBI" id="CHEBI:30616"/>
    </ligand>
</feature>
<feature type="binding site" evidence="1">
    <location>
        <position position="148"/>
    </location>
    <ligand>
        <name>ATP</name>
        <dbReference type="ChEBI" id="CHEBI:30616"/>
    </ligand>
</feature>
<feature type="binding site" evidence="1">
    <location>
        <begin position="153"/>
        <end position="158"/>
    </location>
    <ligand>
        <name>ATP</name>
        <dbReference type="ChEBI" id="CHEBI:30616"/>
    </ligand>
</feature>
<feature type="binding site" evidence="1">
    <location>
        <begin position="188"/>
        <end position="191"/>
    </location>
    <ligand>
        <name>ATP</name>
        <dbReference type="ChEBI" id="CHEBI:30616"/>
    </ligand>
</feature>
<feature type="binding site" evidence="1">
    <location>
        <position position="196"/>
    </location>
    <ligand>
        <name>ATP</name>
        <dbReference type="ChEBI" id="CHEBI:30616"/>
    </ligand>
</feature>
<feature type="binding site" evidence="1">
    <location>
        <position position="260"/>
    </location>
    <ligand>
        <name>Mg(2+)</name>
        <dbReference type="ChEBI" id="CHEBI:18420"/>
    </ligand>
</feature>
<feature type="binding site" evidence="1">
    <location>
        <position position="272"/>
    </location>
    <ligand>
        <name>Mg(2+)</name>
        <dbReference type="ChEBI" id="CHEBI:18420"/>
    </ligand>
</feature>
<feature type="binding site" evidence="1">
    <location>
        <position position="279"/>
    </location>
    <ligand>
        <name>N(1)-(5-phospho-beta-D-ribosyl)glycinamide</name>
        <dbReference type="ChEBI" id="CHEBI:143788"/>
    </ligand>
</feature>
<feature type="binding site" evidence="1">
    <location>
        <position position="349"/>
    </location>
    <ligand>
        <name>N(1)-(5-phospho-beta-D-ribosyl)glycinamide</name>
        <dbReference type="ChEBI" id="CHEBI:143788"/>
    </ligand>
</feature>
<feature type="binding site" evidence="1">
    <location>
        <begin position="356"/>
        <end position="357"/>
    </location>
    <ligand>
        <name>N(1)-(5-phospho-beta-D-ribosyl)glycinamide</name>
        <dbReference type="ChEBI" id="CHEBI:143788"/>
    </ligand>
</feature>
<accession>Q5NE84</accession>
<sequence length="386" mass="42473">MNISNIKIMLLGSGELGKEFIIAAQRLGIHTIVVDRYKNAPAMQVAHESYVIDMLNSDALEQLILAKNPTYIVPEIEAINTDSLVKLEAHNFNIIPCAKAAKLTMDRQGIRALAAQQLNLQTSKFAFANSEQEYLDVIQSIGLPFVIKPVMSSSGKGQSIVKEHNEIKKAWDYAQNGSRGHAKGVIVEQFIDFDYEITLLTVRHKDGTSFCDPIGHIQKDGDYRFSWQPHTMPDTALAKSQEIAKEITDALGGYGVFGVELFIKGDEVFFNEVSPRPHDTGMVTLISQNINEFELHLRAIVGLPIPDIQTLQPSASAAILLEGDTANASICGIDKALADANVDIRIFGKKEIHGKRRMGVVLAKAQNTHIALETSKQALAHIHLTK</sequence>
<comment type="function">
    <text evidence="1">Involved in the de novo purine biosynthesis. Catalyzes the transfer of formate to 5-phospho-ribosyl-glycinamide (GAR), producing 5-phospho-ribosyl-N-formylglycinamide (FGAR). Formate is provided by PurU via hydrolysis of 10-formyl-tetrahydrofolate.</text>
</comment>
<comment type="catalytic activity">
    <reaction evidence="1">
        <text>N(1)-(5-phospho-beta-D-ribosyl)glycinamide + formate + ATP = N(2)-formyl-N(1)-(5-phospho-beta-D-ribosyl)glycinamide + ADP + phosphate + H(+)</text>
        <dbReference type="Rhea" id="RHEA:24829"/>
        <dbReference type="ChEBI" id="CHEBI:15378"/>
        <dbReference type="ChEBI" id="CHEBI:15740"/>
        <dbReference type="ChEBI" id="CHEBI:30616"/>
        <dbReference type="ChEBI" id="CHEBI:43474"/>
        <dbReference type="ChEBI" id="CHEBI:143788"/>
        <dbReference type="ChEBI" id="CHEBI:147286"/>
        <dbReference type="ChEBI" id="CHEBI:456216"/>
        <dbReference type="EC" id="6.3.1.21"/>
    </reaction>
    <physiologicalReaction direction="left-to-right" evidence="1">
        <dbReference type="Rhea" id="RHEA:24830"/>
    </physiologicalReaction>
</comment>
<comment type="pathway">
    <text evidence="1">Purine metabolism; IMP biosynthesis via de novo pathway; N(2)-formyl-N(1)-(5-phospho-D-ribosyl)glycinamide from N(1)-(5-phospho-D-ribosyl)glycinamide (formate route): step 1/1.</text>
</comment>
<comment type="subunit">
    <text evidence="1">Homodimer.</text>
</comment>
<comment type="similarity">
    <text evidence="1">Belongs to the PurK/PurT family.</text>
</comment>
<keyword id="KW-0067">ATP-binding</keyword>
<keyword id="KW-0436">Ligase</keyword>
<keyword id="KW-0460">Magnesium</keyword>
<keyword id="KW-0479">Metal-binding</keyword>
<keyword id="KW-0547">Nucleotide-binding</keyword>
<keyword id="KW-0658">Purine biosynthesis</keyword>
<keyword id="KW-1185">Reference proteome</keyword>
<gene>
    <name evidence="1" type="primary">purT</name>
    <name type="ordered locus">FTT_1767c</name>
</gene>
<evidence type="ECO:0000255" key="1">
    <source>
        <dbReference type="HAMAP-Rule" id="MF_01643"/>
    </source>
</evidence>